<evidence type="ECO:0000255" key="1">
    <source>
        <dbReference type="HAMAP-Rule" id="MF_04000"/>
    </source>
</evidence>
<evidence type="ECO:0000256" key="2">
    <source>
        <dbReference type="SAM" id="MobiDB-lite"/>
    </source>
</evidence>
<dbReference type="EC" id="5.6.2.4" evidence="1"/>
<dbReference type="EMBL" id="U31778">
    <property type="protein sequence ID" value="AAA79389.1"/>
    <property type="molecule type" value="Genomic_DNA"/>
</dbReference>
<dbReference type="SMR" id="P50758"/>
<dbReference type="Proteomes" id="UP000008230">
    <property type="component" value="Genome"/>
</dbReference>
<dbReference type="GO" id="GO:0042025">
    <property type="term" value="C:host cell nucleus"/>
    <property type="evidence" value="ECO:0007669"/>
    <property type="project" value="UniProtKB-SubCell"/>
</dbReference>
<dbReference type="GO" id="GO:0005524">
    <property type="term" value="F:ATP binding"/>
    <property type="evidence" value="ECO:0007669"/>
    <property type="project" value="UniProtKB-UniRule"/>
</dbReference>
<dbReference type="GO" id="GO:0016887">
    <property type="term" value="F:ATP hydrolysis activity"/>
    <property type="evidence" value="ECO:0007669"/>
    <property type="project" value="RHEA"/>
</dbReference>
<dbReference type="GO" id="GO:0003677">
    <property type="term" value="F:DNA binding"/>
    <property type="evidence" value="ECO:0007669"/>
    <property type="project" value="UniProtKB-UniRule"/>
</dbReference>
<dbReference type="GO" id="GO:0003678">
    <property type="term" value="F:DNA helicase activity"/>
    <property type="evidence" value="ECO:0007669"/>
    <property type="project" value="UniProtKB-UniRule"/>
</dbReference>
<dbReference type="GO" id="GO:0006260">
    <property type="term" value="P:DNA replication"/>
    <property type="evidence" value="ECO:0007669"/>
    <property type="project" value="UniProtKB-UniRule"/>
</dbReference>
<dbReference type="Gene3D" id="3.40.1310.10">
    <property type="match status" value="1"/>
</dbReference>
<dbReference type="Gene3D" id="3.40.50.300">
    <property type="entry name" value="P-loop containing nucleotide triphosphate hydrolases"/>
    <property type="match status" value="1"/>
</dbReference>
<dbReference type="Gene3D" id="1.10.10.510">
    <property type="entry name" value="Zinc finger, large T-antigen D1 domain"/>
    <property type="match status" value="1"/>
</dbReference>
<dbReference type="HAMAP" id="MF_04000">
    <property type="entry name" value="PPV_E1"/>
    <property type="match status" value="1"/>
</dbReference>
<dbReference type="InterPro" id="IPR014015">
    <property type="entry name" value="Helicase_SF3_DNA-vir"/>
</dbReference>
<dbReference type="InterPro" id="IPR027417">
    <property type="entry name" value="P-loop_NTPase"/>
</dbReference>
<dbReference type="InterPro" id="IPR001177">
    <property type="entry name" value="PPV_DNA_helicase_E1_C"/>
</dbReference>
<dbReference type="InterPro" id="IPR014000">
    <property type="entry name" value="PPV_DNA_helicase_E1_N"/>
</dbReference>
<dbReference type="InterPro" id="IPR046832">
    <property type="entry name" value="PPV_E1_DBD"/>
</dbReference>
<dbReference type="InterPro" id="IPR046935">
    <property type="entry name" value="PPV_E1_DBD_sf"/>
</dbReference>
<dbReference type="InterPro" id="IPR016393">
    <property type="entry name" value="Rep_E1_papillomaV"/>
</dbReference>
<dbReference type="InterPro" id="IPR037102">
    <property type="entry name" value="Znf_lg_T-Ag_D1_dom_sf"/>
</dbReference>
<dbReference type="Pfam" id="PF00519">
    <property type="entry name" value="PPV_E1_C"/>
    <property type="match status" value="1"/>
</dbReference>
<dbReference type="Pfam" id="PF20450">
    <property type="entry name" value="PPV_E1_DBD"/>
    <property type="match status" value="1"/>
</dbReference>
<dbReference type="Pfam" id="PF00524">
    <property type="entry name" value="PPV_E1_N"/>
    <property type="match status" value="1"/>
</dbReference>
<dbReference type="PIRSF" id="PIRSF003383">
    <property type="entry name" value="Rep_E1_papillomaV"/>
    <property type="match status" value="1"/>
</dbReference>
<dbReference type="SUPFAM" id="SSF55464">
    <property type="entry name" value="Origin of replication-binding domain, RBD-like"/>
    <property type="match status" value="1"/>
</dbReference>
<dbReference type="SUPFAM" id="SSF52540">
    <property type="entry name" value="P-loop containing nucleoside triphosphate hydrolases"/>
    <property type="match status" value="1"/>
</dbReference>
<dbReference type="PROSITE" id="PS51206">
    <property type="entry name" value="SF3_HELICASE_1"/>
    <property type="match status" value="1"/>
</dbReference>
<organismHost>
    <name type="scientific">Homo sapiens</name>
    <name type="common">Human</name>
    <dbReference type="NCBI Taxonomy" id="9606"/>
</organismHost>
<sequence>MADPKGSTSKDGLDDWCIVEAECSDVDNDLEELFDRDTDSDISELLDDNDLEQGNSRELFHQQECKDSEEQLQKLKRKYISPKAIAQLSPRLESISLSPQQKSKRRLFAEQDSGLELTLTNEAEDVSSEVEEVPALDSQPVAEGHLGTVDIHYTELLRASNHKAILLAKFKEAFGIGFNDLTRQFKSYKTCCNDWVLSVYAVHEDLLESSKQLLQQHCDYIWIRGIAAMSLFLLCFKAGKNRGTVHKLMTSMLNVHEKQILSEPPKLRNVAAALFWYKGAMGSGAFSHGPYPNWMAQQTIVGHQSTEASAFDLSEMIQWAFDHNYLDEADIAFQYAKLAPENSNAVAWLAHNNQARFVRECASMVRFYKKGQMKEMSMSEWIYARINEVEGEGHWSSIAKFLRYQQVNVIMFLAALKDMLHSVPKHNCILIHGPPNTGKSAFTMSLIHVLKGRVLSFVNSKSQFWLQPMSETKIALIDDVTDPCWVYMDTYLRNGLDGHYVSLDCKHKAPIQTKFPALLLTSNINVHNEVNYRYLHSRIKGFEFPNPFPMKPDNTPEFELTDQSWKSFFTRLWKQLELSDQEDEGENGESQQAFQCSARSANEHL</sequence>
<keyword id="KW-0067">ATP-binding</keyword>
<keyword id="KW-0235">DNA replication</keyword>
<keyword id="KW-0238">DNA-binding</keyword>
<keyword id="KW-0244">Early protein</keyword>
<keyword id="KW-0347">Helicase</keyword>
<keyword id="KW-1048">Host nucleus</keyword>
<keyword id="KW-0378">Hydrolase</keyword>
<keyword id="KW-0413">Isomerase</keyword>
<keyword id="KW-1017">Isopeptide bond</keyword>
<keyword id="KW-0547">Nucleotide-binding</keyword>
<keyword id="KW-0597">Phosphoprotein</keyword>
<keyword id="KW-0832">Ubl conjugation</keyword>
<gene>
    <name evidence="1" type="primary">E1</name>
</gene>
<proteinExistence type="inferred from homology"/>
<accession>P50758</accession>
<organism>
    <name type="scientific">Human papillomavirus 20</name>
    <dbReference type="NCBI Taxonomy" id="31547"/>
    <lineage>
        <taxon>Viruses</taxon>
        <taxon>Monodnaviria</taxon>
        <taxon>Shotokuvirae</taxon>
        <taxon>Cossaviricota</taxon>
        <taxon>Papovaviricetes</taxon>
        <taxon>Zurhausenvirales</taxon>
        <taxon>Papillomaviridae</taxon>
        <taxon>Firstpapillomavirinae</taxon>
        <taxon>Betapapillomavirus</taxon>
        <taxon>Betapapillomavirus 1</taxon>
    </lineage>
</organism>
<protein>
    <recommendedName>
        <fullName evidence="1">Replication protein E1</fullName>
        <ecNumber evidence="1">5.6.2.4</ecNumber>
    </recommendedName>
    <alternativeName>
        <fullName evidence="1">ATP-dependent helicase E1</fullName>
    </alternativeName>
    <alternativeName>
        <fullName evidence="1">DNA 3'-5' helicase E1</fullName>
    </alternativeName>
</protein>
<comment type="function">
    <text evidence="1">ATP-dependent DNA 3'-5' helicase required for initiation of viral DNA replication. It forms a complex with the viral E2 protein. The E1-E2 complex binds to the replication origin which contains binding sites for both proteins. During the initial step, a dimer of E1 interacts with a dimer of protein E2 leading to a complex that binds the viral origin of replication with high specificity. Then, a second dimer of E1 displaces the E2 dimer in an ATP-dependent manner to form the E1 tetramer. Following this, two E1 monomers are added to each half of the site, which results in the formation of two E1 trimers on the viral ori. Subsequently, two hexamers will be created. The double hexamer acts as a bi-directional helicase machinery and unwinds the viral DNA and then recruits the host DNA polymerase to start replication.</text>
</comment>
<comment type="catalytic activity">
    <reaction evidence="1">
        <text>Couples ATP hydrolysis with the unwinding of duplex DNA by translocating in the 3'-5' direction.</text>
        <dbReference type="EC" id="5.6.2.4"/>
    </reaction>
</comment>
<comment type="catalytic activity">
    <reaction evidence="1">
        <text>ATP + H2O = ADP + phosphate + H(+)</text>
        <dbReference type="Rhea" id="RHEA:13065"/>
        <dbReference type="ChEBI" id="CHEBI:15377"/>
        <dbReference type="ChEBI" id="CHEBI:15378"/>
        <dbReference type="ChEBI" id="CHEBI:30616"/>
        <dbReference type="ChEBI" id="CHEBI:43474"/>
        <dbReference type="ChEBI" id="CHEBI:456216"/>
        <dbReference type="EC" id="5.6.2.4"/>
    </reaction>
</comment>
<comment type="subunit">
    <text evidence="1">Can form hexamers. Interacts with E2 protein; this interaction increases E1 DNA binding specificity. Interacts with host DNA polymerase subunit POLA2. Interacts with host single stranded DNA-binding protein RPA1. Interacts with host TOP1; this interaction stimulates the enzymatic activity of TOP1.</text>
</comment>
<comment type="subcellular location">
    <subcellularLocation>
        <location evidence="1">Host nucleus</location>
    </subcellularLocation>
</comment>
<comment type="PTM">
    <text evidence="1">Phosphorylated.</text>
</comment>
<comment type="PTM">
    <text evidence="1">Sumoylated.</text>
</comment>
<comment type="similarity">
    <text evidence="1">Belongs to the papillomaviridae E1 protein family.</text>
</comment>
<name>VE1_HPV20</name>
<reference key="1">
    <citation type="submission" date="1995-10" db="EMBL/GenBank/DDBJ databases">
        <authorList>
            <person name="Delius H."/>
        </authorList>
    </citation>
    <scope>NUCLEOTIDE SEQUENCE [GENOMIC DNA]</scope>
</reference>
<feature type="chain" id="PRO_0000133118" description="Replication protein E1">
    <location>
        <begin position="1"/>
        <end position="605"/>
    </location>
</feature>
<feature type="domain" description="SF3 helicase" evidence="1">
    <location>
        <begin position="407"/>
        <end position="557"/>
    </location>
</feature>
<feature type="region of interest" description="DNA-binding region" evidence="1">
    <location>
        <begin position="145"/>
        <end position="308"/>
    </location>
</feature>
<feature type="region of interest" description="Disordered" evidence="2">
    <location>
        <begin position="580"/>
        <end position="605"/>
    </location>
</feature>
<feature type="short sequence motif" description="Nuclear localization signal" evidence="1">
    <location>
        <begin position="76"/>
        <end position="78"/>
    </location>
</feature>
<feature type="short sequence motif" description="Nuclear export signal" evidence="1">
    <location>
        <begin position="88"/>
        <end position="97"/>
    </location>
</feature>
<feature type="compositionally biased region" description="Polar residues" evidence="2">
    <location>
        <begin position="588"/>
        <end position="605"/>
    </location>
</feature>
<feature type="binding site" evidence="1">
    <location>
        <begin position="433"/>
        <end position="440"/>
    </location>
    <ligand>
        <name>ATP</name>
        <dbReference type="ChEBI" id="CHEBI:30616"/>
    </ligand>
</feature>
<feature type="modified residue" description="Phosphoserine; by host" evidence="1">
    <location>
        <position position="81"/>
    </location>
</feature>
<feature type="modified residue" description="Phosphoserine; by host" evidence="1">
    <location>
        <position position="89"/>
    </location>
</feature>
<feature type="cross-link" description="Glycyl lysine isopeptide (Lys-Gly) (interchain with G-Cter in SUMO)" evidence="1">
    <location>
        <position position="514"/>
    </location>
</feature>